<geneLocation type="mitochondrion"/>
<evidence type="ECO:0000250" key="1"/>
<evidence type="ECO:0000250" key="2">
    <source>
        <dbReference type="UniProtKB" id="P00157"/>
    </source>
</evidence>
<evidence type="ECO:0000255" key="3">
    <source>
        <dbReference type="PROSITE-ProRule" id="PRU00967"/>
    </source>
</evidence>
<evidence type="ECO:0000255" key="4">
    <source>
        <dbReference type="PROSITE-ProRule" id="PRU00968"/>
    </source>
</evidence>
<comment type="function">
    <text evidence="2">Component of the ubiquinol-cytochrome c reductase complex (complex III or cytochrome b-c1 complex) that is part of the mitochondrial respiratory chain. The b-c1 complex mediates electron transfer from ubiquinol to cytochrome c. Contributes to the generation of a proton gradient across the mitochondrial membrane that is then used for ATP synthesis.</text>
</comment>
<comment type="cofactor">
    <cofactor evidence="2">
        <name>heme b</name>
        <dbReference type="ChEBI" id="CHEBI:60344"/>
    </cofactor>
    <text evidence="2">Binds 2 heme b groups non-covalently.</text>
</comment>
<comment type="subunit">
    <text evidence="2">The cytochrome bc1 complex contains 11 subunits: 3 respiratory subunits (MT-CYB, CYC1 and UQCRFS1), 2 core proteins (UQCRC1 and UQCRC2) and 6 low-molecular weight proteins (UQCRH/QCR6, UQCRB/QCR7, UQCRQ/QCR8, UQCR10/QCR9, UQCR11/QCR10 and a cleavage product of UQCRFS1). This cytochrome bc1 complex then forms a dimer.</text>
</comment>
<comment type="subcellular location">
    <subcellularLocation>
        <location evidence="2">Mitochondrion inner membrane</location>
        <topology evidence="2">Multi-pass membrane protein</topology>
    </subcellularLocation>
</comment>
<comment type="miscellaneous">
    <text evidence="1">Heme 1 (or BL or b562) is low-potential and absorbs at about 562 nm, and heme 2 (or BH or b566) is high-potential and absorbs at about 566 nm.</text>
</comment>
<comment type="similarity">
    <text evidence="3 4">Belongs to the cytochrome b family.</text>
</comment>
<comment type="caution">
    <text evidence="2">The full-length protein contains only eight transmembrane helices, not nine as predicted by bioinformatics tools.</text>
</comment>
<sequence length="379" mass="42876">MTNIRKIHPLLKIVNHSLIDLPAPSNISSWWNFGSLLGLCLMIQIFTGLFLAMHYTSDTTTAFSSVTHICRDVNYGWLIRYIHANGASMFFICLYMHVGRGIYYGSYTYQETWNIGILLLFAVMATAFMGYVLPWGQMSFWGATVITNLLSAIPYIGATLVEWIWGGFSVDKATLTRFFAFHFILPFIIAALVMVHLLFLHETGSNNPSGIPSDSDKIPFHPYYTIKDALGFFILTLFLLLLVLFSPDLLGDPDNYTPANPLNTPPHIKPEWYFLFAYAILRSIPNKLGGVLALVMSILILAFIPFLHISKQRSMMFRPISQALFWTLVADLFTLTWIGGQPVEHPFITIGQVASILYFSIILILMPLASLIENKILKW</sequence>
<feature type="chain" id="PRO_0000061507" description="Cytochrome b">
    <location>
        <begin position="1"/>
        <end position="379"/>
    </location>
</feature>
<feature type="transmembrane region" description="Helical" evidence="2">
    <location>
        <begin position="33"/>
        <end position="53"/>
    </location>
</feature>
<feature type="transmembrane region" description="Helical" evidence="2">
    <location>
        <begin position="77"/>
        <end position="98"/>
    </location>
</feature>
<feature type="transmembrane region" description="Helical" evidence="2">
    <location>
        <begin position="113"/>
        <end position="133"/>
    </location>
</feature>
<feature type="transmembrane region" description="Helical" evidence="2">
    <location>
        <begin position="178"/>
        <end position="198"/>
    </location>
</feature>
<feature type="transmembrane region" description="Helical" evidence="2">
    <location>
        <begin position="226"/>
        <end position="246"/>
    </location>
</feature>
<feature type="transmembrane region" description="Helical" evidence="2">
    <location>
        <begin position="288"/>
        <end position="308"/>
    </location>
</feature>
<feature type="transmembrane region" description="Helical" evidence="2">
    <location>
        <begin position="320"/>
        <end position="340"/>
    </location>
</feature>
<feature type="transmembrane region" description="Helical" evidence="2">
    <location>
        <begin position="347"/>
        <end position="367"/>
    </location>
</feature>
<feature type="binding site" description="axial binding residue" evidence="2">
    <location>
        <position position="83"/>
    </location>
    <ligand>
        <name>heme b</name>
        <dbReference type="ChEBI" id="CHEBI:60344"/>
        <label>b562</label>
    </ligand>
    <ligandPart>
        <name>Fe</name>
        <dbReference type="ChEBI" id="CHEBI:18248"/>
    </ligandPart>
</feature>
<feature type="binding site" description="axial binding residue" evidence="2">
    <location>
        <position position="97"/>
    </location>
    <ligand>
        <name>heme b</name>
        <dbReference type="ChEBI" id="CHEBI:60344"/>
        <label>b566</label>
    </ligand>
    <ligandPart>
        <name>Fe</name>
        <dbReference type="ChEBI" id="CHEBI:18248"/>
    </ligandPart>
</feature>
<feature type="binding site" description="axial binding residue" evidence="2">
    <location>
        <position position="182"/>
    </location>
    <ligand>
        <name>heme b</name>
        <dbReference type="ChEBI" id="CHEBI:60344"/>
        <label>b562</label>
    </ligand>
    <ligandPart>
        <name>Fe</name>
        <dbReference type="ChEBI" id="CHEBI:18248"/>
    </ligandPart>
</feature>
<feature type="binding site" description="axial binding residue" evidence="2">
    <location>
        <position position="196"/>
    </location>
    <ligand>
        <name>heme b</name>
        <dbReference type="ChEBI" id="CHEBI:60344"/>
        <label>b566</label>
    </ligand>
    <ligandPart>
        <name>Fe</name>
        <dbReference type="ChEBI" id="CHEBI:18248"/>
    </ligandPart>
</feature>
<feature type="binding site" evidence="2">
    <location>
        <position position="201"/>
    </location>
    <ligand>
        <name>a ubiquinone</name>
        <dbReference type="ChEBI" id="CHEBI:16389"/>
    </ligand>
</feature>
<accession>Q9G6G3</accession>
<dbReference type="EMBL" id="AB053206">
    <property type="protein sequence ID" value="BAB20499.1"/>
    <property type="molecule type" value="Genomic_DNA"/>
</dbReference>
<dbReference type="SMR" id="Q9G6G3"/>
<dbReference type="GO" id="GO:0005743">
    <property type="term" value="C:mitochondrial inner membrane"/>
    <property type="evidence" value="ECO:0007669"/>
    <property type="project" value="UniProtKB-SubCell"/>
</dbReference>
<dbReference type="GO" id="GO:0045275">
    <property type="term" value="C:respiratory chain complex III"/>
    <property type="evidence" value="ECO:0007669"/>
    <property type="project" value="InterPro"/>
</dbReference>
<dbReference type="GO" id="GO:0046872">
    <property type="term" value="F:metal ion binding"/>
    <property type="evidence" value="ECO:0007669"/>
    <property type="project" value="UniProtKB-KW"/>
</dbReference>
<dbReference type="GO" id="GO:0008121">
    <property type="term" value="F:ubiquinol-cytochrome-c reductase activity"/>
    <property type="evidence" value="ECO:0007669"/>
    <property type="project" value="InterPro"/>
</dbReference>
<dbReference type="GO" id="GO:0006122">
    <property type="term" value="P:mitochondrial electron transport, ubiquinol to cytochrome c"/>
    <property type="evidence" value="ECO:0007669"/>
    <property type="project" value="TreeGrafter"/>
</dbReference>
<dbReference type="CDD" id="cd00290">
    <property type="entry name" value="cytochrome_b_C"/>
    <property type="match status" value="1"/>
</dbReference>
<dbReference type="CDD" id="cd00284">
    <property type="entry name" value="Cytochrome_b_N"/>
    <property type="match status" value="1"/>
</dbReference>
<dbReference type="FunFam" id="1.20.810.10:FF:000002">
    <property type="entry name" value="Cytochrome b"/>
    <property type="match status" value="1"/>
</dbReference>
<dbReference type="Gene3D" id="1.20.810.10">
    <property type="entry name" value="Cytochrome Bc1 Complex, Chain C"/>
    <property type="match status" value="1"/>
</dbReference>
<dbReference type="InterPro" id="IPR005798">
    <property type="entry name" value="Cyt_b/b6_C"/>
</dbReference>
<dbReference type="InterPro" id="IPR036150">
    <property type="entry name" value="Cyt_b/b6_C_sf"/>
</dbReference>
<dbReference type="InterPro" id="IPR005797">
    <property type="entry name" value="Cyt_b/b6_N"/>
</dbReference>
<dbReference type="InterPro" id="IPR027387">
    <property type="entry name" value="Cytb/b6-like_sf"/>
</dbReference>
<dbReference type="InterPro" id="IPR030689">
    <property type="entry name" value="Cytochrome_b"/>
</dbReference>
<dbReference type="InterPro" id="IPR048260">
    <property type="entry name" value="Cytochrome_b_C_euk/bac"/>
</dbReference>
<dbReference type="InterPro" id="IPR048259">
    <property type="entry name" value="Cytochrome_b_N_euk/bac"/>
</dbReference>
<dbReference type="InterPro" id="IPR016174">
    <property type="entry name" value="Di-haem_cyt_TM"/>
</dbReference>
<dbReference type="PANTHER" id="PTHR19271">
    <property type="entry name" value="CYTOCHROME B"/>
    <property type="match status" value="1"/>
</dbReference>
<dbReference type="PANTHER" id="PTHR19271:SF16">
    <property type="entry name" value="CYTOCHROME B"/>
    <property type="match status" value="1"/>
</dbReference>
<dbReference type="Pfam" id="PF00032">
    <property type="entry name" value="Cytochrom_B_C"/>
    <property type="match status" value="1"/>
</dbReference>
<dbReference type="Pfam" id="PF00033">
    <property type="entry name" value="Cytochrome_B"/>
    <property type="match status" value="1"/>
</dbReference>
<dbReference type="PIRSF" id="PIRSF038885">
    <property type="entry name" value="COB"/>
    <property type="match status" value="1"/>
</dbReference>
<dbReference type="SUPFAM" id="SSF81648">
    <property type="entry name" value="a domain/subunit of cytochrome bc1 complex (Ubiquinol-cytochrome c reductase)"/>
    <property type="match status" value="1"/>
</dbReference>
<dbReference type="SUPFAM" id="SSF81342">
    <property type="entry name" value="Transmembrane di-heme cytochromes"/>
    <property type="match status" value="1"/>
</dbReference>
<dbReference type="PROSITE" id="PS51003">
    <property type="entry name" value="CYTB_CTER"/>
    <property type="match status" value="1"/>
</dbReference>
<dbReference type="PROSITE" id="PS51002">
    <property type="entry name" value="CYTB_NTER"/>
    <property type="match status" value="1"/>
</dbReference>
<organism>
    <name type="scientific">Romerolagus diazi</name>
    <name type="common">Volcano rabbit</name>
    <name type="synonym">Lepus diazi</name>
    <dbReference type="NCBI Taxonomy" id="48089"/>
    <lineage>
        <taxon>Eukaryota</taxon>
        <taxon>Metazoa</taxon>
        <taxon>Chordata</taxon>
        <taxon>Craniata</taxon>
        <taxon>Vertebrata</taxon>
        <taxon>Euteleostomi</taxon>
        <taxon>Mammalia</taxon>
        <taxon>Eutheria</taxon>
        <taxon>Euarchontoglires</taxon>
        <taxon>Glires</taxon>
        <taxon>Lagomorpha</taxon>
        <taxon>Leporidae</taxon>
        <taxon>Romerolagus</taxon>
    </lineage>
</organism>
<gene>
    <name type="primary">MT-CYB</name>
    <name type="synonym">COB</name>
    <name type="synonym">CYTB</name>
    <name type="synonym">MTCYB</name>
</gene>
<protein>
    <recommendedName>
        <fullName>Cytochrome b</fullName>
    </recommendedName>
    <alternativeName>
        <fullName>Complex III subunit 3</fullName>
    </alternativeName>
    <alternativeName>
        <fullName>Complex III subunit III</fullName>
    </alternativeName>
    <alternativeName>
        <fullName>Cytochrome b-c1 complex subunit 3</fullName>
    </alternativeName>
    <alternativeName>
        <fullName>Ubiquinol-cytochrome-c reductase complex cytochrome b subunit</fullName>
    </alternativeName>
</protein>
<proteinExistence type="inferred from homology"/>
<name>CYB_ROMDI</name>
<reference key="1">
    <citation type="submission" date="2001-01" db="EMBL/GenBank/DDBJ databases">
        <title>Molecular phylogeny of leporids (Lagomorpha).</title>
        <authorList>
            <person name="Takaki M."/>
            <person name="Suzuki H."/>
            <person name="Wakana S."/>
            <person name="Yamada F."/>
        </authorList>
    </citation>
    <scope>NUCLEOTIDE SEQUENCE [GENOMIC DNA]</scope>
</reference>
<keyword id="KW-0249">Electron transport</keyword>
<keyword id="KW-0349">Heme</keyword>
<keyword id="KW-0408">Iron</keyword>
<keyword id="KW-0472">Membrane</keyword>
<keyword id="KW-0479">Metal-binding</keyword>
<keyword id="KW-0496">Mitochondrion</keyword>
<keyword id="KW-0999">Mitochondrion inner membrane</keyword>
<keyword id="KW-0679">Respiratory chain</keyword>
<keyword id="KW-0812">Transmembrane</keyword>
<keyword id="KW-1133">Transmembrane helix</keyword>
<keyword id="KW-0813">Transport</keyword>
<keyword id="KW-0830">Ubiquinone</keyword>